<dbReference type="EC" id="2.5.1.141" evidence="1"/>
<dbReference type="EMBL" id="AE007869">
    <property type="protein sequence ID" value="AAK86578.1"/>
    <property type="molecule type" value="Genomic_DNA"/>
</dbReference>
<dbReference type="PIR" id="A97453">
    <property type="entry name" value="A97453"/>
</dbReference>
<dbReference type="PIR" id="AC2671">
    <property type="entry name" value="AC2671"/>
</dbReference>
<dbReference type="RefSeq" id="NP_353793.1">
    <property type="nucleotide sequence ID" value="NC_003062.2"/>
</dbReference>
<dbReference type="RefSeq" id="WP_010971137.1">
    <property type="nucleotide sequence ID" value="NC_003062.2"/>
</dbReference>
<dbReference type="SMR" id="A9CJX3"/>
<dbReference type="STRING" id="176299.Atu0769"/>
<dbReference type="EnsemblBacteria" id="AAK86578">
    <property type="protein sequence ID" value="AAK86578"/>
    <property type="gene ID" value="Atu0769"/>
</dbReference>
<dbReference type="GeneID" id="1132807"/>
<dbReference type="KEGG" id="atu:Atu0769"/>
<dbReference type="PATRIC" id="fig|176299.10.peg.768"/>
<dbReference type="eggNOG" id="COG0109">
    <property type="taxonomic scope" value="Bacteria"/>
</dbReference>
<dbReference type="HOGENOM" id="CLU_029631_0_2_5"/>
<dbReference type="OrthoDB" id="9814417at2"/>
<dbReference type="PhylomeDB" id="A9CJX3"/>
<dbReference type="BioCyc" id="AGRO:ATU0769-MONOMER"/>
<dbReference type="UniPathway" id="UPA00834">
    <property type="reaction ID" value="UER00712"/>
</dbReference>
<dbReference type="Proteomes" id="UP000000813">
    <property type="component" value="Chromosome circular"/>
</dbReference>
<dbReference type="GO" id="GO:0005886">
    <property type="term" value="C:plasma membrane"/>
    <property type="evidence" value="ECO:0007669"/>
    <property type="project" value="UniProtKB-SubCell"/>
</dbReference>
<dbReference type="GO" id="GO:0008495">
    <property type="term" value="F:protoheme IX farnesyltransferase activity"/>
    <property type="evidence" value="ECO:0007669"/>
    <property type="project" value="UniProtKB-UniRule"/>
</dbReference>
<dbReference type="GO" id="GO:0048034">
    <property type="term" value="P:heme O biosynthetic process"/>
    <property type="evidence" value="ECO:0007669"/>
    <property type="project" value="UniProtKB-UniRule"/>
</dbReference>
<dbReference type="CDD" id="cd13957">
    <property type="entry name" value="PT_UbiA_Cox10"/>
    <property type="match status" value="1"/>
</dbReference>
<dbReference type="Gene3D" id="1.10.357.140">
    <property type="entry name" value="UbiA prenyltransferase"/>
    <property type="match status" value="1"/>
</dbReference>
<dbReference type="HAMAP" id="MF_00154">
    <property type="entry name" value="CyoE_CtaB"/>
    <property type="match status" value="1"/>
</dbReference>
<dbReference type="InterPro" id="IPR006369">
    <property type="entry name" value="Protohaem_IX_farnesylTrfase"/>
</dbReference>
<dbReference type="InterPro" id="IPR000537">
    <property type="entry name" value="UbiA_prenyltransferase"/>
</dbReference>
<dbReference type="InterPro" id="IPR030470">
    <property type="entry name" value="UbiA_prenylTrfase_CS"/>
</dbReference>
<dbReference type="InterPro" id="IPR044878">
    <property type="entry name" value="UbiA_sf"/>
</dbReference>
<dbReference type="NCBIfam" id="TIGR01473">
    <property type="entry name" value="cyoE_ctaB"/>
    <property type="match status" value="1"/>
</dbReference>
<dbReference type="NCBIfam" id="NF003349">
    <property type="entry name" value="PRK04375.1-2"/>
    <property type="match status" value="1"/>
</dbReference>
<dbReference type="PANTHER" id="PTHR43448:SF7">
    <property type="entry name" value="4-HYDROXYBENZOATE SOLANESYLTRANSFERASE"/>
    <property type="match status" value="1"/>
</dbReference>
<dbReference type="PANTHER" id="PTHR43448">
    <property type="entry name" value="PROTOHEME IX FARNESYLTRANSFERASE, MITOCHONDRIAL"/>
    <property type="match status" value="1"/>
</dbReference>
<dbReference type="Pfam" id="PF01040">
    <property type="entry name" value="UbiA"/>
    <property type="match status" value="1"/>
</dbReference>
<dbReference type="PROSITE" id="PS00943">
    <property type="entry name" value="UBIA"/>
    <property type="match status" value="1"/>
</dbReference>
<name>COXX_AGRFC</name>
<sequence length="317" mass="33888">MTVIDDRDMMGAESSELSEAGARDYFELLKPRVMSLVVFTAFAGLVLAPGEINPILGLIAILCIAVGAGASGALNMWYDADIDAVMTRTAKRPIPSGRIAPREALAFGLTLSAFSVVILGLAVNWFSAGLLAFTIFFYAVVYTMWLKRSTPQNIVIGGAAGAFPPMLGWACVTGGVSLDSVILFLIIFLWTPAHFWALALFKMRDYGAVGIPMMPNVAGERSTKNQMIVYAVLTAAAAVAPFFTGLASAGYGIFAAVLSAIFVYCSFDVRRMPEGDEKMLPAKKMFAYSVLYLFAIFSGLLADHFAPALKAVISGVL</sequence>
<proteinExistence type="inferred from homology"/>
<reference key="1">
    <citation type="journal article" date="2001" name="Science">
        <title>The genome of the natural genetic engineer Agrobacterium tumefaciens C58.</title>
        <authorList>
            <person name="Wood D.W."/>
            <person name="Setubal J.C."/>
            <person name="Kaul R."/>
            <person name="Monks D.E."/>
            <person name="Kitajima J.P."/>
            <person name="Okura V.K."/>
            <person name="Zhou Y."/>
            <person name="Chen L."/>
            <person name="Wood G.E."/>
            <person name="Almeida N.F. Jr."/>
            <person name="Woo L."/>
            <person name="Chen Y."/>
            <person name="Paulsen I.T."/>
            <person name="Eisen J.A."/>
            <person name="Karp P.D."/>
            <person name="Bovee D. Sr."/>
            <person name="Chapman P."/>
            <person name="Clendenning J."/>
            <person name="Deatherage G."/>
            <person name="Gillet W."/>
            <person name="Grant C."/>
            <person name="Kutyavin T."/>
            <person name="Levy R."/>
            <person name="Li M.-J."/>
            <person name="McClelland E."/>
            <person name="Palmieri A."/>
            <person name="Raymond C."/>
            <person name="Rouse G."/>
            <person name="Saenphimmachak C."/>
            <person name="Wu Z."/>
            <person name="Romero P."/>
            <person name="Gordon D."/>
            <person name="Zhang S."/>
            <person name="Yoo H."/>
            <person name="Tao Y."/>
            <person name="Biddle P."/>
            <person name="Jung M."/>
            <person name="Krespan W."/>
            <person name="Perry M."/>
            <person name="Gordon-Kamm B."/>
            <person name="Liao L."/>
            <person name="Kim S."/>
            <person name="Hendrick C."/>
            <person name="Zhao Z.-Y."/>
            <person name="Dolan M."/>
            <person name="Chumley F."/>
            <person name="Tingey S.V."/>
            <person name="Tomb J.-F."/>
            <person name="Gordon M.P."/>
            <person name="Olson M.V."/>
            <person name="Nester E.W."/>
        </authorList>
    </citation>
    <scope>NUCLEOTIDE SEQUENCE [LARGE SCALE GENOMIC DNA]</scope>
    <source>
        <strain>C58 / ATCC 33970</strain>
    </source>
</reference>
<reference key="2">
    <citation type="journal article" date="2001" name="Science">
        <title>Genome sequence of the plant pathogen and biotechnology agent Agrobacterium tumefaciens C58.</title>
        <authorList>
            <person name="Goodner B."/>
            <person name="Hinkle G."/>
            <person name="Gattung S."/>
            <person name="Miller N."/>
            <person name="Blanchard M."/>
            <person name="Qurollo B."/>
            <person name="Goldman B.S."/>
            <person name="Cao Y."/>
            <person name="Askenazi M."/>
            <person name="Halling C."/>
            <person name="Mullin L."/>
            <person name="Houmiel K."/>
            <person name="Gordon J."/>
            <person name="Vaudin M."/>
            <person name="Iartchouk O."/>
            <person name="Epp A."/>
            <person name="Liu F."/>
            <person name="Wollam C."/>
            <person name="Allinger M."/>
            <person name="Doughty D."/>
            <person name="Scott C."/>
            <person name="Lappas C."/>
            <person name="Markelz B."/>
            <person name="Flanagan C."/>
            <person name="Crowell C."/>
            <person name="Gurson J."/>
            <person name="Lomo C."/>
            <person name="Sear C."/>
            <person name="Strub G."/>
            <person name="Cielo C."/>
            <person name="Slater S."/>
        </authorList>
    </citation>
    <scope>NUCLEOTIDE SEQUENCE [LARGE SCALE GENOMIC DNA]</scope>
    <source>
        <strain>C58 / ATCC 33970</strain>
    </source>
</reference>
<accession>A9CJX3</accession>
<protein>
    <recommendedName>
        <fullName evidence="1">Protoheme IX farnesyltransferase</fullName>
        <ecNumber evidence="1">2.5.1.141</ecNumber>
    </recommendedName>
    <alternativeName>
        <fullName evidence="1">Heme B farnesyltransferase</fullName>
    </alternativeName>
    <alternativeName>
        <fullName evidence="1">Heme O synthase</fullName>
    </alternativeName>
</protein>
<feature type="chain" id="PRO_0000326988" description="Protoheme IX farnesyltransferase">
    <location>
        <begin position="1"/>
        <end position="317"/>
    </location>
</feature>
<feature type="transmembrane region" description="Helical" evidence="1">
    <location>
        <begin position="33"/>
        <end position="53"/>
    </location>
</feature>
<feature type="transmembrane region" description="Helical" evidence="1">
    <location>
        <begin position="54"/>
        <end position="74"/>
    </location>
</feature>
<feature type="transmembrane region" description="Helical" evidence="1">
    <location>
        <begin position="117"/>
        <end position="137"/>
    </location>
</feature>
<feature type="transmembrane region" description="Helical" evidence="1">
    <location>
        <begin position="154"/>
        <end position="174"/>
    </location>
</feature>
<feature type="transmembrane region" description="Helical" evidence="1">
    <location>
        <begin position="181"/>
        <end position="201"/>
    </location>
</feature>
<feature type="transmembrane region" description="Helical" evidence="1">
    <location>
        <begin position="242"/>
        <end position="262"/>
    </location>
</feature>
<feature type="transmembrane region" description="Helical" evidence="1">
    <location>
        <begin position="285"/>
        <end position="305"/>
    </location>
</feature>
<organism>
    <name type="scientific">Agrobacterium fabrum (strain C58 / ATCC 33970)</name>
    <name type="common">Agrobacterium tumefaciens (strain C58)</name>
    <dbReference type="NCBI Taxonomy" id="176299"/>
    <lineage>
        <taxon>Bacteria</taxon>
        <taxon>Pseudomonadati</taxon>
        <taxon>Pseudomonadota</taxon>
        <taxon>Alphaproteobacteria</taxon>
        <taxon>Hyphomicrobiales</taxon>
        <taxon>Rhizobiaceae</taxon>
        <taxon>Rhizobium/Agrobacterium group</taxon>
        <taxon>Agrobacterium</taxon>
        <taxon>Agrobacterium tumefaciens complex</taxon>
    </lineage>
</organism>
<evidence type="ECO:0000255" key="1">
    <source>
        <dbReference type="HAMAP-Rule" id="MF_00154"/>
    </source>
</evidence>
<keyword id="KW-0997">Cell inner membrane</keyword>
<keyword id="KW-1003">Cell membrane</keyword>
<keyword id="KW-0350">Heme biosynthesis</keyword>
<keyword id="KW-0472">Membrane</keyword>
<keyword id="KW-1185">Reference proteome</keyword>
<keyword id="KW-0808">Transferase</keyword>
<keyword id="KW-0812">Transmembrane</keyword>
<keyword id="KW-1133">Transmembrane helix</keyword>
<gene>
    <name evidence="1" type="primary">ctaB</name>
    <name type="ordered locus">Atu0769</name>
    <name type="ORF">AGR_C_1402</name>
</gene>
<comment type="function">
    <text evidence="1">Converts heme B (protoheme IX) to heme O by substitution of the vinyl group on carbon 2 of heme B porphyrin ring with a hydroxyethyl farnesyl side group.</text>
</comment>
<comment type="catalytic activity">
    <reaction evidence="1">
        <text>heme b + (2E,6E)-farnesyl diphosphate + H2O = Fe(II)-heme o + diphosphate</text>
        <dbReference type="Rhea" id="RHEA:28070"/>
        <dbReference type="ChEBI" id="CHEBI:15377"/>
        <dbReference type="ChEBI" id="CHEBI:33019"/>
        <dbReference type="ChEBI" id="CHEBI:60344"/>
        <dbReference type="ChEBI" id="CHEBI:60530"/>
        <dbReference type="ChEBI" id="CHEBI:175763"/>
        <dbReference type="EC" id="2.5.1.141"/>
    </reaction>
</comment>
<comment type="pathway">
    <text evidence="1">Porphyrin-containing compound metabolism; heme O biosynthesis; heme O from protoheme: step 1/1.</text>
</comment>
<comment type="subcellular location">
    <subcellularLocation>
        <location evidence="1">Cell inner membrane</location>
        <topology evidence="1">Multi-pass membrane protein</topology>
    </subcellularLocation>
</comment>
<comment type="miscellaneous">
    <text evidence="1">Carbon 2 of the heme B porphyrin ring is defined according to the Fischer nomenclature.</text>
</comment>
<comment type="similarity">
    <text evidence="1">Belongs to the UbiA prenyltransferase family. Protoheme IX farnesyltransferase subfamily.</text>
</comment>